<evidence type="ECO:0000250" key="1"/>
<evidence type="ECO:0000256" key="2">
    <source>
        <dbReference type="SAM" id="MobiDB-lite"/>
    </source>
</evidence>
<evidence type="ECO:0000305" key="3"/>
<dbReference type="EMBL" id="CH981527">
    <property type="protein sequence ID" value="EDK45461.1"/>
    <property type="molecule type" value="Genomic_DNA"/>
</dbReference>
<dbReference type="RefSeq" id="XP_001525712.1">
    <property type="nucleotide sequence ID" value="XM_001525662.1"/>
</dbReference>
<dbReference type="SMR" id="A5E203"/>
<dbReference type="FunCoup" id="A5E203">
    <property type="interactions" value="129"/>
</dbReference>
<dbReference type="STRING" id="379508.A5E203"/>
<dbReference type="GeneID" id="5232341"/>
<dbReference type="KEGG" id="lel:PVL30_003122"/>
<dbReference type="VEuPathDB" id="FungiDB:LELG_03640"/>
<dbReference type="eggNOG" id="KOG4102">
    <property type="taxonomic scope" value="Eukaryota"/>
</dbReference>
<dbReference type="HOGENOM" id="CLU_098333_0_1_1"/>
<dbReference type="InParanoid" id="A5E203"/>
<dbReference type="OMA" id="YQPHYEN"/>
<dbReference type="OrthoDB" id="307488at2759"/>
<dbReference type="Proteomes" id="UP000001996">
    <property type="component" value="Unassembled WGS sequence"/>
</dbReference>
<dbReference type="GO" id="GO:0005634">
    <property type="term" value="C:nucleus"/>
    <property type="evidence" value="ECO:0007669"/>
    <property type="project" value="UniProtKB-SubCell"/>
</dbReference>
<dbReference type="GO" id="GO:0000164">
    <property type="term" value="C:protein phosphatase type 1 complex"/>
    <property type="evidence" value="ECO:0007669"/>
    <property type="project" value="EnsemblFungi"/>
</dbReference>
<dbReference type="GO" id="GO:0008157">
    <property type="term" value="F:protein phosphatase 1 binding"/>
    <property type="evidence" value="ECO:0007669"/>
    <property type="project" value="TreeGrafter"/>
</dbReference>
<dbReference type="GO" id="GO:0072542">
    <property type="term" value="F:protein phosphatase activator activity"/>
    <property type="evidence" value="ECO:0007669"/>
    <property type="project" value="EnsemblFungi"/>
</dbReference>
<dbReference type="GO" id="GO:0004865">
    <property type="term" value="F:protein serine/threonine phosphatase inhibitor activity"/>
    <property type="evidence" value="ECO:0007669"/>
    <property type="project" value="EnsemblFungi"/>
</dbReference>
<dbReference type="GO" id="GO:0005977">
    <property type="term" value="P:glycogen metabolic process"/>
    <property type="evidence" value="ECO:0007669"/>
    <property type="project" value="EnsemblFungi"/>
</dbReference>
<dbReference type="GO" id="GO:0006873">
    <property type="term" value="P:intracellular monoatomic ion homeostasis"/>
    <property type="evidence" value="ECO:0007669"/>
    <property type="project" value="EnsemblFungi"/>
</dbReference>
<dbReference type="GO" id="GO:0007094">
    <property type="term" value="P:mitotic spindle assembly checkpoint signaling"/>
    <property type="evidence" value="ECO:0007669"/>
    <property type="project" value="EnsemblFungi"/>
</dbReference>
<dbReference type="GO" id="GO:1900180">
    <property type="term" value="P:regulation of protein localization to nucleus"/>
    <property type="evidence" value="ECO:0007669"/>
    <property type="project" value="EnsemblFungi"/>
</dbReference>
<dbReference type="InterPro" id="IPR011107">
    <property type="entry name" value="PPI_Ypi1"/>
</dbReference>
<dbReference type="PANTHER" id="PTHR20835:SF0">
    <property type="entry name" value="E3 UBIQUITIN-PROTEIN LIGASE PPP1R11"/>
    <property type="match status" value="1"/>
</dbReference>
<dbReference type="PANTHER" id="PTHR20835">
    <property type="entry name" value="E3 UBIQUITIN-PROTEIN LIGASE PPP1R11-RELATED"/>
    <property type="match status" value="1"/>
</dbReference>
<dbReference type="Pfam" id="PF07491">
    <property type="entry name" value="PPI_Ypi1"/>
    <property type="match status" value="1"/>
</dbReference>
<protein>
    <recommendedName>
        <fullName>Type 1 phosphatases regulator YPI1</fullName>
    </recommendedName>
</protein>
<keyword id="KW-0539">Nucleus</keyword>
<keyword id="KW-1185">Reference proteome</keyword>
<feature type="chain" id="PRO_0000333478" description="Type 1 phosphatases regulator YPI1">
    <location>
        <begin position="1"/>
        <end position="165"/>
    </location>
</feature>
<feature type="region of interest" description="Disordered" evidence="2">
    <location>
        <begin position="1"/>
        <end position="81"/>
    </location>
</feature>
<feature type="region of interest" description="Disordered" evidence="2">
    <location>
        <begin position="96"/>
        <end position="165"/>
    </location>
</feature>
<feature type="compositionally biased region" description="Low complexity" evidence="2">
    <location>
        <begin position="1"/>
        <end position="40"/>
    </location>
</feature>
<feature type="compositionally biased region" description="Basic and acidic residues" evidence="2">
    <location>
        <begin position="43"/>
        <end position="53"/>
    </location>
</feature>
<feature type="compositionally biased region" description="Basic residues" evidence="2">
    <location>
        <begin position="54"/>
        <end position="64"/>
    </location>
</feature>
<feature type="compositionally biased region" description="Basic and acidic residues" evidence="2">
    <location>
        <begin position="65"/>
        <end position="76"/>
    </location>
</feature>
<feature type="compositionally biased region" description="Basic and acidic residues" evidence="2">
    <location>
        <begin position="96"/>
        <end position="111"/>
    </location>
</feature>
<feature type="compositionally biased region" description="Basic and acidic residues" evidence="2">
    <location>
        <begin position="155"/>
        <end position="165"/>
    </location>
</feature>
<gene>
    <name type="primary">YPI1</name>
    <name type="ORF">LELG_03640</name>
</gene>
<proteinExistence type="inferred from homology"/>
<organism>
    <name type="scientific">Lodderomyces elongisporus (strain ATCC 11503 / CBS 2605 / JCM 1781 / NBRC 1676 / NRRL YB-4239)</name>
    <name type="common">Yeast</name>
    <name type="synonym">Saccharomyces elongisporus</name>
    <dbReference type="NCBI Taxonomy" id="379508"/>
    <lineage>
        <taxon>Eukaryota</taxon>
        <taxon>Fungi</taxon>
        <taxon>Dikarya</taxon>
        <taxon>Ascomycota</taxon>
        <taxon>Saccharomycotina</taxon>
        <taxon>Pichiomycetes</taxon>
        <taxon>Debaryomycetaceae</taxon>
        <taxon>Candida/Lodderomyces clade</taxon>
        <taxon>Lodderomyces</taxon>
    </lineage>
</organism>
<sequence>MPQQTQTQVETSTSSSSLSQTQTEQQSGPSPPQDQQVQGVLRLRPDSATDTKNKNKSKKKKPKVRWTEDVVDNEHMNKKKTKICCIFHPQRSFDDEMAEHNHEHDHGHCDSSDSDSSSDLSSDESEEENGNKLPSNGRGSDKDKLYKPNSYEYQPHYENKSRVQL</sequence>
<comment type="function">
    <text evidence="1">Regulator of type 1 phosphatases which maintains protein phosphatase activity under strict control.</text>
</comment>
<comment type="subcellular location">
    <subcellularLocation>
        <location evidence="1">Nucleus</location>
    </subcellularLocation>
</comment>
<comment type="similarity">
    <text evidence="3">Belongs to the YPI1 family.</text>
</comment>
<reference key="1">
    <citation type="journal article" date="2009" name="Nature">
        <title>Evolution of pathogenicity and sexual reproduction in eight Candida genomes.</title>
        <authorList>
            <person name="Butler G."/>
            <person name="Rasmussen M.D."/>
            <person name="Lin M.F."/>
            <person name="Santos M.A.S."/>
            <person name="Sakthikumar S."/>
            <person name="Munro C.A."/>
            <person name="Rheinbay E."/>
            <person name="Grabherr M."/>
            <person name="Forche A."/>
            <person name="Reedy J.L."/>
            <person name="Agrafioti I."/>
            <person name="Arnaud M.B."/>
            <person name="Bates S."/>
            <person name="Brown A.J.P."/>
            <person name="Brunke S."/>
            <person name="Costanzo M.C."/>
            <person name="Fitzpatrick D.A."/>
            <person name="de Groot P.W.J."/>
            <person name="Harris D."/>
            <person name="Hoyer L.L."/>
            <person name="Hube B."/>
            <person name="Klis F.M."/>
            <person name="Kodira C."/>
            <person name="Lennard N."/>
            <person name="Logue M.E."/>
            <person name="Martin R."/>
            <person name="Neiman A.M."/>
            <person name="Nikolaou E."/>
            <person name="Quail M.A."/>
            <person name="Quinn J."/>
            <person name="Santos M.C."/>
            <person name="Schmitzberger F.F."/>
            <person name="Sherlock G."/>
            <person name="Shah P."/>
            <person name="Silverstein K.A.T."/>
            <person name="Skrzypek M.S."/>
            <person name="Soll D."/>
            <person name="Staggs R."/>
            <person name="Stansfield I."/>
            <person name="Stumpf M.P.H."/>
            <person name="Sudbery P.E."/>
            <person name="Srikantha T."/>
            <person name="Zeng Q."/>
            <person name="Berman J."/>
            <person name="Berriman M."/>
            <person name="Heitman J."/>
            <person name="Gow N.A.R."/>
            <person name="Lorenz M.C."/>
            <person name="Birren B.W."/>
            <person name="Kellis M."/>
            <person name="Cuomo C.A."/>
        </authorList>
    </citation>
    <scope>NUCLEOTIDE SEQUENCE [LARGE SCALE GENOMIC DNA]</scope>
    <source>
        <strain>ATCC 11503 / BCRC 21390 / CBS 2605 / JCM 1781 / NBRC 1676 / NRRL YB-4239</strain>
    </source>
</reference>
<name>YPI1_LODEL</name>
<accession>A5E203</accession>